<sequence length="135" mass="15624">MSADYYEHLYCVFCYCVLGKVEARRCYDKKIRTVVRGGLRCAVCTACLEKGLYLERVLNAPQPVYQGSIEEPDPFIQKACIRCMYCGGILTRDEKDRHRYFEELYVIFRNQVLGRCYTCTRHGMCSAPYRANATG</sequence>
<accession>P03128</accession>
<keyword id="KW-0010">Activator</keyword>
<keyword id="KW-0238">DNA-binding</keyword>
<keyword id="KW-0244">Early protein</keyword>
<keyword id="KW-1035">Host cytoplasm</keyword>
<keyword id="KW-1048">Host nucleus</keyword>
<keyword id="KW-0945">Host-virus interaction</keyword>
<keyword id="KW-1090">Inhibition of host innate immune response by virus</keyword>
<keyword id="KW-0479">Metal-binding</keyword>
<keyword id="KW-1119">Modulation of host cell apoptosis by virus</keyword>
<keyword id="KW-1185">Reference proteome</keyword>
<keyword id="KW-0804">Transcription</keyword>
<keyword id="KW-0805">Transcription regulation</keyword>
<keyword id="KW-0899">Viral immunoevasion</keyword>
<keyword id="KW-0862">Zinc</keyword>
<keyword id="KW-0863">Zinc-finger</keyword>
<protein>
    <recommendedName>
        <fullName evidence="1">Protein E6</fullName>
    </recommendedName>
</protein>
<feature type="chain" id="PRO_0000133389" description="Protein E6">
    <location>
        <begin position="1"/>
        <end position="135"/>
    </location>
</feature>
<feature type="zinc finger region" evidence="1">
    <location>
        <begin position="11"/>
        <end position="47"/>
    </location>
</feature>
<feature type="zinc finger region" evidence="1">
    <location>
        <begin position="83"/>
        <end position="119"/>
    </location>
</feature>
<evidence type="ECO:0000255" key="1">
    <source>
        <dbReference type="HAMAP-Rule" id="MF_04006"/>
    </source>
</evidence>
<evidence type="ECO:0000305" key="2"/>
<organism>
    <name type="scientific">Odocoileus virginianus papillomavirus 1</name>
    <name type="common">DPV</name>
    <name type="synonym">Deer papillomavirus</name>
    <dbReference type="NCBI Taxonomy" id="2772504"/>
    <lineage>
        <taxon>Viruses</taxon>
        <taxon>Monodnaviria</taxon>
        <taxon>Shotokuvirae</taxon>
        <taxon>Cossaviricota</taxon>
        <taxon>Papovaviricetes</taxon>
        <taxon>Zurhausenvirales</taxon>
        <taxon>Papillomaviridae</taxon>
        <taxon>Firstpapillomavirinae</taxon>
        <taxon>Deltapapillomavirus</taxon>
        <taxon>Deer papillomavirus</taxon>
    </lineage>
</organism>
<comment type="function">
    <text evidence="1">Plays a major role in the induction and maintenance of cellular transformation. E6 associates with host UBE3A/E6-AP ubiquitin-protein ligase and modulates its activity. Protects host keratinocytes from apoptosis by mediating the degradation of host BAK1. May also inhibit host immune response.</text>
</comment>
<comment type="subunit">
    <text evidence="1">Forms homodimers. Interacts with ubiquitin-protein ligase UBE3A/E6-AP; this interaction stimulates UBE3A ubiquitin activity. Interacts with host BAK1.</text>
</comment>
<comment type="subcellular location">
    <subcellularLocation>
        <location evidence="1">Host cytoplasm</location>
    </subcellularLocation>
    <subcellularLocation>
        <location evidence="1">Host nucleus</location>
    </subcellularLocation>
</comment>
<comment type="similarity">
    <text evidence="1 2">Belongs to the papillomaviridae E6 protein family.</text>
</comment>
<name>VE6_OVPVD</name>
<reference key="1">
    <citation type="journal article" date="1985" name="J. Virol.">
        <title>Molecular cloning and nucleotide sequence of deer papillomavirus.</title>
        <authorList>
            <person name="Groff D.E."/>
            <person name="Lancaster W.D."/>
        </authorList>
    </citation>
    <scope>NUCLEOTIDE SEQUENCE [GENOMIC DNA]</scope>
</reference>
<dbReference type="EMBL" id="M11910">
    <property type="protein sequence ID" value="AAA66841.1"/>
    <property type="molecule type" value="Genomic_DNA"/>
</dbReference>
<dbReference type="PIR" id="A03687">
    <property type="entry name" value="W6WLDP"/>
</dbReference>
<dbReference type="RefSeq" id="NP_041293.1">
    <property type="nucleotide sequence ID" value="NC_001523.1"/>
</dbReference>
<dbReference type="SMR" id="P03128"/>
<dbReference type="GeneID" id="1488979"/>
<dbReference type="KEGG" id="vg:1488979"/>
<dbReference type="Proteomes" id="UP000009185">
    <property type="component" value="Segment"/>
</dbReference>
<dbReference type="GO" id="GO:0030430">
    <property type="term" value="C:host cell cytoplasm"/>
    <property type="evidence" value="ECO:0007669"/>
    <property type="project" value="UniProtKB-SubCell"/>
</dbReference>
<dbReference type="GO" id="GO:0042025">
    <property type="term" value="C:host cell nucleus"/>
    <property type="evidence" value="ECO:0007669"/>
    <property type="project" value="UniProtKB-SubCell"/>
</dbReference>
<dbReference type="GO" id="GO:0003677">
    <property type="term" value="F:DNA binding"/>
    <property type="evidence" value="ECO:0007669"/>
    <property type="project" value="UniProtKB-UniRule"/>
</dbReference>
<dbReference type="GO" id="GO:0008270">
    <property type="term" value="F:zinc ion binding"/>
    <property type="evidence" value="ECO:0007669"/>
    <property type="project" value="UniProtKB-KW"/>
</dbReference>
<dbReference type="GO" id="GO:0006351">
    <property type="term" value="P:DNA-templated transcription"/>
    <property type="evidence" value="ECO:0007669"/>
    <property type="project" value="UniProtKB-UniRule"/>
</dbReference>
<dbReference type="GO" id="GO:0006355">
    <property type="term" value="P:regulation of DNA-templated transcription"/>
    <property type="evidence" value="ECO:0007669"/>
    <property type="project" value="UniProtKB-UniRule"/>
</dbReference>
<dbReference type="GO" id="GO:0052150">
    <property type="term" value="P:symbiont-mediated perturbation of host apoptosis"/>
    <property type="evidence" value="ECO:0007669"/>
    <property type="project" value="UniProtKB-KW"/>
</dbReference>
<dbReference type="GO" id="GO:0039648">
    <property type="term" value="P:symbiont-mediated perturbation of host ubiquitin-like protein modification"/>
    <property type="evidence" value="ECO:0007669"/>
    <property type="project" value="UniProtKB-UniRule"/>
</dbReference>
<dbReference type="GO" id="GO:0052170">
    <property type="term" value="P:symbiont-mediated suppression of host innate immune response"/>
    <property type="evidence" value="ECO:0007669"/>
    <property type="project" value="UniProtKB-KW"/>
</dbReference>
<dbReference type="GO" id="GO:0039502">
    <property type="term" value="P:symbiont-mediated suppression of host type I interferon-mediated signaling pathway"/>
    <property type="evidence" value="ECO:0007669"/>
    <property type="project" value="UniProtKB-UniRule"/>
</dbReference>
<dbReference type="Gene3D" id="3.30.240.40">
    <property type="entry name" value="E6 early regulatory protein"/>
    <property type="match status" value="2"/>
</dbReference>
<dbReference type="HAMAP" id="MF_04006">
    <property type="entry name" value="HPV_E6"/>
    <property type="match status" value="1"/>
</dbReference>
<dbReference type="InterPro" id="IPR001334">
    <property type="entry name" value="E6"/>
</dbReference>
<dbReference type="InterPro" id="IPR038575">
    <property type="entry name" value="E6_sf"/>
</dbReference>
<dbReference type="Pfam" id="PF00518">
    <property type="entry name" value="E6"/>
    <property type="match status" value="1"/>
</dbReference>
<dbReference type="SUPFAM" id="SSF161229">
    <property type="entry name" value="E6 C-terminal domain-like"/>
    <property type="match status" value="2"/>
</dbReference>
<gene>
    <name evidence="1" type="primary">E6</name>
</gene>
<proteinExistence type="inferred from homology"/>
<organismHost>
    <name type="scientific">Odocoileus virginianus</name>
    <name type="common">White-tailed deer</name>
    <dbReference type="NCBI Taxonomy" id="9874"/>
</organismHost>